<gene>
    <name type="ordered locus">AM1_4368</name>
</gene>
<protein>
    <recommendedName>
        <fullName>UPF0758 protein AM1_4368</fullName>
    </recommendedName>
</protein>
<name>Y4368_ACAM1</name>
<proteinExistence type="inferred from homology"/>
<feature type="chain" id="PRO_1000089783" description="UPF0758 protein AM1_4368">
    <location>
        <begin position="1"/>
        <end position="243"/>
    </location>
</feature>
<feature type="domain" description="MPN" evidence="1">
    <location>
        <begin position="113"/>
        <end position="235"/>
    </location>
</feature>
<feature type="short sequence motif" description="JAMM motif" evidence="1">
    <location>
        <begin position="184"/>
        <end position="197"/>
    </location>
</feature>
<feature type="binding site" evidence="1">
    <location>
        <position position="184"/>
    </location>
    <ligand>
        <name>Zn(2+)</name>
        <dbReference type="ChEBI" id="CHEBI:29105"/>
        <note>catalytic</note>
    </ligand>
</feature>
<feature type="binding site" evidence="1">
    <location>
        <position position="186"/>
    </location>
    <ligand>
        <name>Zn(2+)</name>
        <dbReference type="ChEBI" id="CHEBI:29105"/>
        <note>catalytic</note>
    </ligand>
</feature>
<feature type="binding site" evidence="1">
    <location>
        <position position="197"/>
    </location>
    <ligand>
        <name>Zn(2+)</name>
        <dbReference type="ChEBI" id="CHEBI:29105"/>
        <note>catalytic</note>
    </ligand>
</feature>
<dbReference type="EMBL" id="CP000828">
    <property type="protein sequence ID" value="ABW29347.1"/>
    <property type="molecule type" value="Genomic_DNA"/>
</dbReference>
<dbReference type="SMR" id="B0CEV0"/>
<dbReference type="STRING" id="329726.AM1_4368"/>
<dbReference type="KEGG" id="amr:AM1_4368"/>
<dbReference type="eggNOG" id="COG2003">
    <property type="taxonomic scope" value="Bacteria"/>
</dbReference>
<dbReference type="HOGENOM" id="CLU_073529_0_2_3"/>
<dbReference type="OrthoDB" id="9804482at2"/>
<dbReference type="Proteomes" id="UP000000268">
    <property type="component" value="Chromosome"/>
</dbReference>
<dbReference type="GO" id="GO:0046872">
    <property type="term" value="F:metal ion binding"/>
    <property type="evidence" value="ECO:0007669"/>
    <property type="project" value="UniProtKB-KW"/>
</dbReference>
<dbReference type="GO" id="GO:0008237">
    <property type="term" value="F:metallopeptidase activity"/>
    <property type="evidence" value="ECO:0007669"/>
    <property type="project" value="UniProtKB-KW"/>
</dbReference>
<dbReference type="GO" id="GO:0006508">
    <property type="term" value="P:proteolysis"/>
    <property type="evidence" value="ECO:0007669"/>
    <property type="project" value="UniProtKB-KW"/>
</dbReference>
<dbReference type="CDD" id="cd08071">
    <property type="entry name" value="MPN_DUF2466"/>
    <property type="match status" value="1"/>
</dbReference>
<dbReference type="Gene3D" id="3.40.140.10">
    <property type="entry name" value="Cytidine Deaminase, domain 2"/>
    <property type="match status" value="1"/>
</dbReference>
<dbReference type="InterPro" id="IPR037518">
    <property type="entry name" value="MPN"/>
</dbReference>
<dbReference type="InterPro" id="IPR025657">
    <property type="entry name" value="RadC_JAB"/>
</dbReference>
<dbReference type="InterPro" id="IPR001405">
    <property type="entry name" value="UPF0758"/>
</dbReference>
<dbReference type="InterPro" id="IPR020891">
    <property type="entry name" value="UPF0758_CS"/>
</dbReference>
<dbReference type="InterPro" id="IPR046778">
    <property type="entry name" value="UPF0758_N"/>
</dbReference>
<dbReference type="NCBIfam" id="NF000642">
    <property type="entry name" value="PRK00024.1"/>
    <property type="match status" value="1"/>
</dbReference>
<dbReference type="NCBIfam" id="TIGR00608">
    <property type="entry name" value="radc"/>
    <property type="match status" value="1"/>
</dbReference>
<dbReference type="PANTHER" id="PTHR30471">
    <property type="entry name" value="DNA REPAIR PROTEIN RADC"/>
    <property type="match status" value="1"/>
</dbReference>
<dbReference type="PANTHER" id="PTHR30471:SF3">
    <property type="entry name" value="UPF0758 PROTEIN YEES-RELATED"/>
    <property type="match status" value="1"/>
</dbReference>
<dbReference type="Pfam" id="PF04002">
    <property type="entry name" value="RadC"/>
    <property type="match status" value="1"/>
</dbReference>
<dbReference type="Pfam" id="PF20582">
    <property type="entry name" value="UPF0758_N"/>
    <property type="match status" value="1"/>
</dbReference>
<dbReference type="PROSITE" id="PS50249">
    <property type="entry name" value="MPN"/>
    <property type="match status" value="1"/>
</dbReference>
<dbReference type="PROSITE" id="PS01302">
    <property type="entry name" value="UPF0758"/>
    <property type="match status" value="1"/>
</dbReference>
<accession>B0CEV0</accession>
<evidence type="ECO:0000255" key="1">
    <source>
        <dbReference type="PROSITE-ProRule" id="PRU01182"/>
    </source>
</evidence>
<evidence type="ECO:0000305" key="2"/>
<keyword id="KW-0378">Hydrolase</keyword>
<keyword id="KW-0479">Metal-binding</keyword>
<keyword id="KW-0482">Metalloprotease</keyword>
<keyword id="KW-0645">Protease</keyword>
<keyword id="KW-1185">Reference proteome</keyword>
<keyword id="KW-0862">Zinc</keyword>
<sequence length="243" mass="26318">MTYSLRILDLPESDRPRERLIAQGAKYLTHAELLAILLGTGQGPGKLSAVGLGQHVLQHFSEHQQDPLTVLRDVNASELTTIQGIGPAKATTILAAIELGKRICQARPPELTVIDDPAVAAAALAGELMWQSQERFAVLLLDVKHRLLGTQVVSIGTATETLAHPRDIFREIIRKGATRAIVAHNHPSGQTDPSPEDLELTQQLLSGAQILGLPLLDHLILGNGDFTSLRQTTSLWNDCPQDL</sequence>
<organism>
    <name type="scientific">Acaryochloris marina (strain MBIC 11017)</name>
    <dbReference type="NCBI Taxonomy" id="329726"/>
    <lineage>
        <taxon>Bacteria</taxon>
        <taxon>Bacillati</taxon>
        <taxon>Cyanobacteriota</taxon>
        <taxon>Cyanophyceae</taxon>
        <taxon>Acaryochloridales</taxon>
        <taxon>Acaryochloridaceae</taxon>
        <taxon>Acaryochloris</taxon>
    </lineage>
</organism>
<comment type="similarity">
    <text evidence="2">Belongs to the UPF0758 family.</text>
</comment>
<reference key="1">
    <citation type="journal article" date="2008" name="Proc. Natl. Acad. Sci. U.S.A.">
        <title>Niche adaptation and genome expansion in the chlorophyll d-producing cyanobacterium Acaryochloris marina.</title>
        <authorList>
            <person name="Swingley W.D."/>
            <person name="Chen M."/>
            <person name="Cheung P.C."/>
            <person name="Conrad A.L."/>
            <person name="Dejesa L.C."/>
            <person name="Hao J."/>
            <person name="Honchak B.M."/>
            <person name="Karbach L.E."/>
            <person name="Kurdoglu A."/>
            <person name="Lahiri S."/>
            <person name="Mastrian S.D."/>
            <person name="Miyashita H."/>
            <person name="Page L."/>
            <person name="Ramakrishna P."/>
            <person name="Satoh S."/>
            <person name="Sattley W.M."/>
            <person name="Shimada Y."/>
            <person name="Taylor H.L."/>
            <person name="Tomo T."/>
            <person name="Tsuchiya T."/>
            <person name="Wang Z.T."/>
            <person name="Raymond J."/>
            <person name="Mimuro M."/>
            <person name="Blankenship R.E."/>
            <person name="Touchman J.W."/>
        </authorList>
    </citation>
    <scope>NUCLEOTIDE SEQUENCE [LARGE SCALE GENOMIC DNA]</scope>
    <source>
        <strain>MBIC 11017</strain>
    </source>
</reference>